<gene>
    <name evidence="1" type="primary">rpmD</name>
    <name type="ordered locus">Tfu_2628</name>
</gene>
<reference key="1">
    <citation type="journal article" date="2007" name="J. Bacteriol.">
        <title>Genome sequence and analysis of the soil cellulolytic actinomycete Thermobifida fusca YX.</title>
        <authorList>
            <person name="Lykidis A."/>
            <person name="Mavromatis K."/>
            <person name="Ivanova N."/>
            <person name="Anderson I."/>
            <person name="Land M."/>
            <person name="DiBartolo G."/>
            <person name="Martinez M."/>
            <person name="Lapidus A."/>
            <person name="Lucas S."/>
            <person name="Copeland A."/>
            <person name="Richardson P."/>
            <person name="Wilson D.B."/>
            <person name="Kyrpides N."/>
        </authorList>
    </citation>
    <scope>NUCLEOTIDE SEQUENCE [LARGE SCALE GENOMIC DNA]</scope>
    <source>
        <strain>YX</strain>
    </source>
</reference>
<name>RL30_THEFY</name>
<keyword id="KW-0687">Ribonucleoprotein</keyword>
<keyword id="KW-0689">Ribosomal protein</keyword>
<comment type="subunit">
    <text evidence="1">Part of the 50S ribosomal subunit.</text>
</comment>
<comment type="similarity">
    <text evidence="1">Belongs to the universal ribosomal protein uL30 family.</text>
</comment>
<evidence type="ECO:0000255" key="1">
    <source>
        <dbReference type="HAMAP-Rule" id="MF_01371"/>
    </source>
</evidence>
<evidence type="ECO:0000305" key="2"/>
<organism>
    <name type="scientific">Thermobifida fusca (strain YX)</name>
    <dbReference type="NCBI Taxonomy" id="269800"/>
    <lineage>
        <taxon>Bacteria</taxon>
        <taxon>Bacillati</taxon>
        <taxon>Actinomycetota</taxon>
        <taxon>Actinomycetes</taxon>
        <taxon>Streptosporangiales</taxon>
        <taxon>Nocardiopsidaceae</taxon>
        <taxon>Thermobifida</taxon>
    </lineage>
</organism>
<accession>Q47LL1</accession>
<dbReference type="EMBL" id="CP000088">
    <property type="protein sequence ID" value="AAZ56661.1"/>
    <property type="molecule type" value="Genomic_DNA"/>
</dbReference>
<dbReference type="RefSeq" id="WP_011293051.1">
    <property type="nucleotide sequence ID" value="NC_007333.1"/>
</dbReference>
<dbReference type="SMR" id="Q47LL1"/>
<dbReference type="STRING" id="269800.Tfu_2628"/>
<dbReference type="KEGG" id="tfu:Tfu_2628"/>
<dbReference type="eggNOG" id="COG1841">
    <property type="taxonomic scope" value="Bacteria"/>
</dbReference>
<dbReference type="HOGENOM" id="CLU_131047_2_0_11"/>
<dbReference type="OrthoDB" id="9812790at2"/>
<dbReference type="GO" id="GO:0022625">
    <property type="term" value="C:cytosolic large ribosomal subunit"/>
    <property type="evidence" value="ECO:0007669"/>
    <property type="project" value="TreeGrafter"/>
</dbReference>
<dbReference type="GO" id="GO:0003735">
    <property type="term" value="F:structural constituent of ribosome"/>
    <property type="evidence" value="ECO:0007669"/>
    <property type="project" value="InterPro"/>
</dbReference>
<dbReference type="GO" id="GO:0006412">
    <property type="term" value="P:translation"/>
    <property type="evidence" value="ECO:0007669"/>
    <property type="project" value="UniProtKB-UniRule"/>
</dbReference>
<dbReference type="CDD" id="cd01658">
    <property type="entry name" value="Ribosomal_L30"/>
    <property type="match status" value="1"/>
</dbReference>
<dbReference type="FunFam" id="3.30.1390.20:FF:000001">
    <property type="entry name" value="50S ribosomal protein L30"/>
    <property type="match status" value="1"/>
</dbReference>
<dbReference type="Gene3D" id="3.30.1390.20">
    <property type="entry name" value="Ribosomal protein L30, ferredoxin-like fold domain"/>
    <property type="match status" value="1"/>
</dbReference>
<dbReference type="HAMAP" id="MF_01371_B">
    <property type="entry name" value="Ribosomal_uL30_B"/>
    <property type="match status" value="1"/>
</dbReference>
<dbReference type="InterPro" id="IPR036919">
    <property type="entry name" value="Ribo_uL30_ferredoxin-like_sf"/>
</dbReference>
<dbReference type="InterPro" id="IPR005996">
    <property type="entry name" value="Ribosomal_uL30_bac-type"/>
</dbReference>
<dbReference type="InterPro" id="IPR016082">
    <property type="entry name" value="Ribosomal_uL30_ferredoxin-like"/>
</dbReference>
<dbReference type="NCBIfam" id="TIGR01308">
    <property type="entry name" value="rpmD_bact"/>
    <property type="match status" value="1"/>
</dbReference>
<dbReference type="PANTHER" id="PTHR15892:SF2">
    <property type="entry name" value="LARGE RIBOSOMAL SUBUNIT PROTEIN UL30M"/>
    <property type="match status" value="1"/>
</dbReference>
<dbReference type="PANTHER" id="PTHR15892">
    <property type="entry name" value="MITOCHONDRIAL RIBOSOMAL PROTEIN L30"/>
    <property type="match status" value="1"/>
</dbReference>
<dbReference type="Pfam" id="PF00327">
    <property type="entry name" value="Ribosomal_L30"/>
    <property type="match status" value="1"/>
</dbReference>
<dbReference type="PIRSF" id="PIRSF002211">
    <property type="entry name" value="Ribosomal_L30_bac-type"/>
    <property type="match status" value="1"/>
</dbReference>
<dbReference type="SUPFAM" id="SSF55129">
    <property type="entry name" value="Ribosomal protein L30p/L7e"/>
    <property type="match status" value="1"/>
</dbReference>
<protein>
    <recommendedName>
        <fullName evidence="1">Large ribosomal subunit protein uL30</fullName>
    </recommendedName>
    <alternativeName>
        <fullName evidence="2">50S ribosomal protein L30</fullName>
    </alternativeName>
</protein>
<proteinExistence type="inferred from homology"/>
<sequence length="61" mass="6589">MAKLKITQVRSKIGGNRKQHAALASLGLGRIGKSVIRDDRPEVRGQINVVAHLVTVEEVSS</sequence>
<feature type="chain" id="PRO_0000273881" description="Large ribosomal subunit protein uL30">
    <location>
        <begin position="1"/>
        <end position="61"/>
    </location>
</feature>